<organism>
    <name type="scientific">Homo sapiens</name>
    <name type="common">Human</name>
    <dbReference type="NCBI Taxonomy" id="9606"/>
    <lineage>
        <taxon>Eukaryota</taxon>
        <taxon>Metazoa</taxon>
        <taxon>Chordata</taxon>
        <taxon>Craniata</taxon>
        <taxon>Vertebrata</taxon>
        <taxon>Euteleostomi</taxon>
        <taxon>Mammalia</taxon>
        <taxon>Eutheria</taxon>
        <taxon>Euarchontoglires</taxon>
        <taxon>Primates</taxon>
        <taxon>Haplorrhini</taxon>
        <taxon>Catarrhini</taxon>
        <taxon>Hominidae</taxon>
        <taxon>Homo</taxon>
    </lineage>
</organism>
<gene>
    <name type="primary">KLK8</name>
    <name type="synonym">NRPN</name>
    <name type="synonym">PRSS19</name>
    <name type="synonym">TADG14</name>
    <name type="ORF">UNQ283/PRO322</name>
</gene>
<dbReference type="EC" id="3.4.21.118"/>
<dbReference type="EMBL" id="AB009849">
    <property type="protein sequence ID" value="BAA28673.1"/>
    <property type="molecule type" value="mRNA"/>
</dbReference>
<dbReference type="EMBL" id="AB012761">
    <property type="protein sequence ID" value="BAA28676.1"/>
    <property type="molecule type" value="Genomic_DNA"/>
</dbReference>
<dbReference type="EMBL" id="AF055982">
    <property type="protein sequence ID" value="AAD56050.1"/>
    <property type="molecule type" value="mRNA"/>
</dbReference>
<dbReference type="EMBL" id="AB008390">
    <property type="protein sequence ID" value="BAA82665.1"/>
    <property type="molecule type" value="mRNA"/>
</dbReference>
<dbReference type="EMBL" id="AB008927">
    <property type="protein sequence ID" value="BAA82666.1"/>
    <property type="molecule type" value="mRNA"/>
</dbReference>
<dbReference type="EMBL" id="AB010780">
    <property type="protein sequence ID" value="BAA88684.1"/>
    <property type="molecule type" value="Genomic_DNA"/>
</dbReference>
<dbReference type="EMBL" id="AF243527">
    <property type="protein sequence ID" value="AAG33361.1"/>
    <property type="molecule type" value="Genomic_DNA"/>
</dbReference>
<dbReference type="EMBL" id="AF251125">
    <property type="protein sequence ID" value="AAF79144.1"/>
    <property type="molecule type" value="Genomic_DNA"/>
</dbReference>
<dbReference type="EMBL" id="AF251125">
    <property type="protein sequence ID" value="AAF79145.1"/>
    <property type="molecule type" value="Genomic_DNA"/>
</dbReference>
<dbReference type="EMBL" id="AF095742">
    <property type="protein sequence ID" value="AAD25979.1"/>
    <property type="molecule type" value="mRNA"/>
</dbReference>
<dbReference type="EMBL" id="AF095743">
    <property type="protein sequence ID" value="AAD29574.1"/>
    <property type="molecule type" value="Genomic_DNA"/>
</dbReference>
<dbReference type="EMBL" id="DQ267420">
    <property type="protein sequence ID" value="ABB83339.1"/>
    <property type="molecule type" value="mRNA"/>
</dbReference>
<dbReference type="EMBL" id="AY359036">
    <property type="protein sequence ID" value="AAQ89395.1"/>
    <property type="molecule type" value="mRNA"/>
</dbReference>
<dbReference type="EMBL" id="AC011473">
    <property type="protein sequence ID" value="AAG23254.1"/>
    <property type="molecule type" value="Genomic_DNA"/>
</dbReference>
<dbReference type="EMBL" id="AC011483">
    <property type="status" value="NOT_ANNOTATED_CDS"/>
    <property type="molecule type" value="Genomic_DNA"/>
</dbReference>
<dbReference type="EMBL" id="CH471135">
    <property type="protein sequence ID" value="EAW71962.1"/>
    <property type="molecule type" value="Genomic_DNA"/>
</dbReference>
<dbReference type="EMBL" id="BC040887">
    <property type="protein sequence ID" value="AAH40887.1"/>
    <property type="molecule type" value="mRNA"/>
</dbReference>
<dbReference type="EMBL" id="AY563055">
    <property type="protein sequence ID" value="AAT76913.1"/>
    <property type="molecule type" value="Genomic_DNA"/>
</dbReference>
<dbReference type="EMBL" id="AY563055">
    <property type="protein sequence ID" value="AAT76914.1"/>
    <property type="molecule type" value="Genomic_DNA"/>
</dbReference>
<dbReference type="EMBL" id="AY563056">
    <property type="protein sequence ID" value="AAT76915.1"/>
    <property type="molecule type" value="Genomic_DNA"/>
</dbReference>
<dbReference type="EMBL" id="AY563056">
    <property type="protein sequence ID" value="AAT76916.1"/>
    <property type="molecule type" value="Genomic_DNA"/>
</dbReference>
<dbReference type="EMBL" id="AY563057">
    <property type="protein sequence ID" value="AAT76917.1"/>
    <property type="molecule type" value="Genomic_DNA"/>
</dbReference>
<dbReference type="EMBL" id="AY563057">
    <property type="protein sequence ID" value="AAT76918.1"/>
    <property type="molecule type" value="Genomic_DNA"/>
</dbReference>
<dbReference type="EMBL" id="AY563058">
    <property type="protein sequence ID" value="AAT76919.1"/>
    <property type="molecule type" value="Genomic_DNA"/>
</dbReference>
<dbReference type="EMBL" id="AY563058">
    <property type="protein sequence ID" value="AAT76920.1"/>
    <property type="molecule type" value="Genomic_DNA"/>
</dbReference>
<dbReference type="EMBL" id="AY563059">
    <property type="protein sequence ID" value="AAT76921.1"/>
    <property type="molecule type" value="Genomic_DNA"/>
</dbReference>
<dbReference type="EMBL" id="AY563059">
    <property type="protein sequence ID" value="AAT76922.1"/>
    <property type="molecule type" value="Genomic_DNA"/>
</dbReference>
<dbReference type="EMBL" id="AY563060">
    <property type="protein sequence ID" value="AAT76923.1"/>
    <property type="molecule type" value="Genomic_DNA"/>
</dbReference>
<dbReference type="EMBL" id="AY563060">
    <property type="protein sequence ID" value="AAT76924.1"/>
    <property type="molecule type" value="Genomic_DNA"/>
</dbReference>
<dbReference type="EMBL" id="AY563061">
    <property type="protein sequence ID" value="AAT76925.1"/>
    <property type="molecule type" value="Genomic_DNA"/>
</dbReference>
<dbReference type="EMBL" id="AY563061">
    <property type="protein sequence ID" value="AAT76926.1"/>
    <property type="molecule type" value="Genomic_DNA"/>
</dbReference>
<dbReference type="EMBL" id="AY563062">
    <property type="protein sequence ID" value="AAT76927.1"/>
    <property type="molecule type" value="Genomic_DNA"/>
</dbReference>
<dbReference type="EMBL" id="AY563062">
    <property type="protein sequence ID" value="AAT76928.1"/>
    <property type="molecule type" value="Genomic_DNA"/>
</dbReference>
<dbReference type="EMBL" id="AY563063">
    <property type="protein sequence ID" value="AAT76929.1"/>
    <property type="molecule type" value="Genomic_DNA"/>
</dbReference>
<dbReference type="EMBL" id="AY563063">
    <property type="protein sequence ID" value="AAT76930.1"/>
    <property type="molecule type" value="Genomic_DNA"/>
</dbReference>
<dbReference type="EMBL" id="AY563064">
    <property type="protein sequence ID" value="AAT76931.1"/>
    <property type="molecule type" value="Genomic_DNA"/>
</dbReference>
<dbReference type="EMBL" id="AY563064">
    <property type="protein sequence ID" value="AAT76932.1"/>
    <property type="molecule type" value="Genomic_DNA"/>
</dbReference>
<dbReference type="EMBL" id="AY563065">
    <property type="protein sequence ID" value="AAT76933.1"/>
    <property type="molecule type" value="Genomic_DNA"/>
</dbReference>
<dbReference type="EMBL" id="AY563065">
    <property type="protein sequence ID" value="AAT76934.1"/>
    <property type="molecule type" value="Genomic_DNA"/>
</dbReference>
<dbReference type="EMBL" id="AY563066">
    <property type="protein sequence ID" value="AAT76935.1"/>
    <property type="molecule type" value="Genomic_DNA"/>
</dbReference>
<dbReference type="EMBL" id="AY563066">
    <property type="protein sequence ID" value="AAT76936.1"/>
    <property type="molecule type" value="Genomic_DNA"/>
</dbReference>
<dbReference type="EMBL" id="AY563067">
    <property type="protein sequence ID" value="AAT76937.1"/>
    <property type="molecule type" value="Genomic_DNA"/>
</dbReference>
<dbReference type="EMBL" id="AY563067">
    <property type="protein sequence ID" value="AAT76938.1"/>
    <property type="molecule type" value="Genomic_DNA"/>
</dbReference>
<dbReference type="CCDS" id="CCDS12813.1">
    <molecule id="O60259-1"/>
</dbReference>
<dbReference type="CCDS" id="CCDS12814.1">
    <molecule id="O60259-3"/>
</dbReference>
<dbReference type="CCDS" id="CCDS12815.1">
    <molecule id="O60259-4"/>
</dbReference>
<dbReference type="CCDS" id="CCDS42600.1">
    <molecule id="O60259-2"/>
</dbReference>
<dbReference type="RefSeq" id="NP_001268360.1">
    <property type="nucleotide sequence ID" value="NM_001281431.1"/>
</dbReference>
<dbReference type="RefSeq" id="NP_009127.1">
    <molecule id="O60259-1"/>
    <property type="nucleotide sequence ID" value="NM_007196.4"/>
</dbReference>
<dbReference type="RefSeq" id="NP_653088.1">
    <molecule id="O60259-2"/>
    <property type="nucleotide sequence ID" value="NM_144505.3"/>
</dbReference>
<dbReference type="RefSeq" id="NP_653089.1">
    <molecule id="O60259-3"/>
    <property type="nucleotide sequence ID" value="NM_144506.3"/>
</dbReference>
<dbReference type="RefSeq" id="NP_653090.1">
    <molecule id="O60259-4"/>
    <property type="nucleotide sequence ID" value="NM_144507.3"/>
</dbReference>
<dbReference type="PDB" id="5MS3">
    <property type="method" value="X-ray"/>
    <property type="resolution" value="2.30 A"/>
    <property type="chains" value="A=33-260"/>
</dbReference>
<dbReference type="PDB" id="5MS4">
    <property type="method" value="X-ray"/>
    <property type="resolution" value="2.10 A"/>
    <property type="chains" value="A/B/C/D=33-260"/>
</dbReference>
<dbReference type="PDBsum" id="5MS3"/>
<dbReference type="PDBsum" id="5MS4"/>
<dbReference type="SMR" id="O60259"/>
<dbReference type="BioGRID" id="116371">
    <property type="interactions" value="46"/>
</dbReference>
<dbReference type="FunCoup" id="O60259">
    <property type="interactions" value="73"/>
</dbReference>
<dbReference type="IntAct" id="O60259">
    <property type="interactions" value="31"/>
</dbReference>
<dbReference type="STRING" id="9606.ENSP00000375682"/>
<dbReference type="BindingDB" id="O60259"/>
<dbReference type="ChEMBL" id="CHEMBL4812"/>
<dbReference type="GuidetoPHARMACOLOGY" id="2378"/>
<dbReference type="MEROPS" id="S01.244"/>
<dbReference type="GlyCosmos" id="O60259">
    <property type="glycosylation" value="1 site, No reported glycans"/>
</dbReference>
<dbReference type="GlyGen" id="O60259">
    <property type="glycosylation" value="2 sites, 1 O-linked glycan (1 site)"/>
</dbReference>
<dbReference type="iPTMnet" id="O60259"/>
<dbReference type="PhosphoSitePlus" id="O60259"/>
<dbReference type="BioMuta" id="KLK8"/>
<dbReference type="jPOST" id="O60259"/>
<dbReference type="MassIVE" id="O60259"/>
<dbReference type="PeptideAtlas" id="O60259"/>
<dbReference type="ProteomicsDB" id="49286">
    <molecule id="O60259-1"/>
</dbReference>
<dbReference type="ProteomicsDB" id="49287">
    <molecule id="O60259-2"/>
</dbReference>
<dbReference type="ProteomicsDB" id="49288">
    <molecule id="O60259-3"/>
</dbReference>
<dbReference type="Pumba" id="O60259"/>
<dbReference type="Antibodypedia" id="32417">
    <property type="antibodies" value="1347 antibodies from 32 providers"/>
</dbReference>
<dbReference type="DNASU" id="11202"/>
<dbReference type="Ensembl" id="ENST00000320838.9">
    <molecule id="O60259-4"/>
    <property type="protein sequence ID" value="ENSP00000325072.5"/>
    <property type="gene ID" value="ENSG00000129455.16"/>
</dbReference>
<dbReference type="Ensembl" id="ENST00000347619.8">
    <molecule id="O60259-3"/>
    <property type="protein sequence ID" value="ENSP00000341555.3"/>
    <property type="gene ID" value="ENSG00000129455.16"/>
</dbReference>
<dbReference type="Ensembl" id="ENST00000391806.6">
    <molecule id="O60259-2"/>
    <property type="protein sequence ID" value="ENSP00000375682.1"/>
    <property type="gene ID" value="ENSG00000129455.16"/>
</dbReference>
<dbReference type="Ensembl" id="ENST00000593490.1">
    <molecule id="O60259-4"/>
    <property type="protein sequence ID" value="ENSP00000469278.1"/>
    <property type="gene ID" value="ENSG00000129455.16"/>
</dbReference>
<dbReference type="Ensembl" id="ENST00000600767.5">
    <molecule id="O60259-1"/>
    <property type="protein sequence ID" value="ENSP00000472016.1"/>
    <property type="gene ID" value="ENSG00000129455.16"/>
</dbReference>
<dbReference type="Ensembl" id="ENST00000695909.1">
    <molecule id="O60259-1"/>
    <property type="protein sequence ID" value="ENSP00000512260.1"/>
    <property type="gene ID" value="ENSG00000129455.16"/>
</dbReference>
<dbReference type="GeneID" id="11202"/>
<dbReference type="KEGG" id="hsa:11202"/>
<dbReference type="MANE-Select" id="ENST00000695909.1">
    <property type="protein sequence ID" value="ENSP00000512260.1"/>
    <property type="RefSeq nucleotide sequence ID" value="NM_007196.4"/>
    <property type="RefSeq protein sequence ID" value="NP_009127.1"/>
</dbReference>
<dbReference type="UCSC" id="uc002puq.2">
    <molecule id="O60259-1"/>
    <property type="organism name" value="human"/>
</dbReference>
<dbReference type="AGR" id="HGNC:6369"/>
<dbReference type="CTD" id="11202"/>
<dbReference type="DisGeNET" id="11202"/>
<dbReference type="GeneCards" id="KLK8"/>
<dbReference type="HGNC" id="HGNC:6369">
    <property type="gene designation" value="KLK8"/>
</dbReference>
<dbReference type="HPA" id="ENSG00000129455">
    <property type="expression patterns" value="Tissue enhanced (esophagus, skin, vagina)"/>
</dbReference>
<dbReference type="MIM" id="605644">
    <property type="type" value="gene"/>
</dbReference>
<dbReference type="neXtProt" id="NX_O60259"/>
<dbReference type="OpenTargets" id="ENSG00000129455"/>
<dbReference type="PharmGKB" id="PA30158"/>
<dbReference type="VEuPathDB" id="HostDB:ENSG00000129455"/>
<dbReference type="GeneTree" id="ENSGT01020000230389"/>
<dbReference type="HOGENOM" id="CLU_006842_1_1_1"/>
<dbReference type="InParanoid" id="O60259"/>
<dbReference type="OMA" id="GMTCYSG"/>
<dbReference type="OrthoDB" id="546450at2759"/>
<dbReference type="PAN-GO" id="O60259">
    <property type="GO annotations" value="3 GO annotations based on evolutionary models"/>
</dbReference>
<dbReference type="PhylomeDB" id="O60259"/>
<dbReference type="TreeFam" id="TF331065"/>
<dbReference type="BRENDA" id="3.4.21.118">
    <property type="organism ID" value="2681"/>
</dbReference>
<dbReference type="PathwayCommons" id="O60259"/>
<dbReference type="Reactome" id="R-HSA-6809371">
    <property type="pathway name" value="Formation of the cornified envelope"/>
</dbReference>
<dbReference type="SignaLink" id="O60259"/>
<dbReference type="BioGRID-ORCS" id="11202">
    <property type="hits" value="10 hits in 1144 CRISPR screens"/>
</dbReference>
<dbReference type="GeneWiki" id="KLK8"/>
<dbReference type="GenomeRNAi" id="11202"/>
<dbReference type="Pharos" id="O60259">
    <property type="development level" value="Tchem"/>
</dbReference>
<dbReference type="PRO" id="PR:O60259"/>
<dbReference type="Proteomes" id="UP000005640">
    <property type="component" value="Chromosome 19"/>
</dbReference>
<dbReference type="RNAct" id="O60259">
    <property type="molecule type" value="protein"/>
</dbReference>
<dbReference type="Bgee" id="ENSG00000129455">
    <property type="expression patterns" value="Expressed in lower esophagus mucosa and 104 other cell types or tissues"/>
</dbReference>
<dbReference type="ExpressionAtlas" id="O60259">
    <property type="expression patterns" value="baseline and differential"/>
</dbReference>
<dbReference type="GO" id="GO:0005737">
    <property type="term" value="C:cytoplasm"/>
    <property type="evidence" value="ECO:0000314"/>
    <property type="project" value="UniProtKB"/>
</dbReference>
<dbReference type="GO" id="GO:0005576">
    <property type="term" value="C:extracellular region"/>
    <property type="evidence" value="ECO:0000304"/>
    <property type="project" value="Reactome"/>
</dbReference>
<dbReference type="GO" id="GO:0005615">
    <property type="term" value="C:extracellular space"/>
    <property type="evidence" value="ECO:0000250"/>
    <property type="project" value="UniProtKB"/>
</dbReference>
<dbReference type="GO" id="GO:0030141">
    <property type="term" value="C:secretory granule"/>
    <property type="evidence" value="ECO:0000318"/>
    <property type="project" value="GO_Central"/>
</dbReference>
<dbReference type="GO" id="GO:0097180">
    <property type="term" value="C:serine protease inhibitor complex"/>
    <property type="evidence" value="ECO:0000314"/>
    <property type="project" value="BHF-UCL"/>
</dbReference>
<dbReference type="GO" id="GO:0004252">
    <property type="term" value="F:serine-type endopeptidase activity"/>
    <property type="evidence" value="ECO:0000314"/>
    <property type="project" value="UniProtKB"/>
</dbReference>
<dbReference type="GO" id="GO:0043616">
    <property type="term" value="P:keratinocyte proliferation"/>
    <property type="evidence" value="ECO:0000250"/>
    <property type="project" value="UniProtKB"/>
</dbReference>
<dbReference type="GO" id="GO:0007613">
    <property type="term" value="P:memory"/>
    <property type="evidence" value="ECO:0000250"/>
    <property type="project" value="UniProtKB"/>
</dbReference>
<dbReference type="GO" id="GO:0048812">
    <property type="term" value="P:neuron projection morphogenesis"/>
    <property type="evidence" value="ECO:0000250"/>
    <property type="project" value="UniProtKB"/>
</dbReference>
<dbReference type="GO" id="GO:0051604">
    <property type="term" value="P:protein maturation"/>
    <property type="evidence" value="ECO:0000318"/>
    <property type="project" value="GO_Central"/>
</dbReference>
<dbReference type="GO" id="GO:0006508">
    <property type="term" value="P:proteolysis"/>
    <property type="evidence" value="ECO:0007669"/>
    <property type="project" value="UniProtKB-KW"/>
</dbReference>
<dbReference type="GO" id="GO:0050807">
    <property type="term" value="P:regulation of synapse organization"/>
    <property type="evidence" value="ECO:0000250"/>
    <property type="project" value="UniProtKB"/>
</dbReference>
<dbReference type="GO" id="GO:0009611">
    <property type="term" value="P:response to wounding"/>
    <property type="evidence" value="ECO:0000250"/>
    <property type="project" value="UniProtKB"/>
</dbReference>
<dbReference type="GO" id="GO:0050808">
    <property type="term" value="P:synapse organization"/>
    <property type="evidence" value="ECO:0007669"/>
    <property type="project" value="Ensembl"/>
</dbReference>
<dbReference type="CDD" id="cd00190">
    <property type="entry name" value="Tryp_SPc"/>
    <property type="match status" value="1"/>
</dbReference>
<dbReference type="FunFam" id="2.40.10.10:FF:000087">
    <property type="entry name" value="Kallikrein 8 (Neuropsin/ovasin)"/>
    <property type="match status" value="1"/>
</dbReference>
<dbReference type="FunFam" id="2.40.10.10:FF:000041">
    <property type="entry name" value="kallikrein-6 isoform X2"/>
    <property type="match status" value="1"/>
</dbReference>
<dbReference type="Gene3D" id="2.40.10.10">
    <property type="entry name" value="Trypsin-like serine proteases"/>
    <property type="match status" value="2"/>
</dbReference>
<dbReference type="InterPro" id="IPR009003">
    <property type="entry name" value="Peptidase_S1_PA"/>
</dbReference>
<dbReference type="InterPro" id="IPR043504">
    <property type="entry name" value="Peptidase_S1_PA_chymotrypsin"/>
</dbReference>
<dbReference type="InterPro" id="IPR001314">
    <property type="entry name" value="Peptidase_S1A"/>
</dbReference>
<dbReference type="InterPro" id="IPR001254">
    <property type="entry name" value="Trypsin_dom"/>
</dbReference>
<dbReference type="InterPro" id="IPR018114">
    <property type="entry name" value="TRYPSIN_HIS"/>
</dbReference>
<dbReference type="InterPro" id="IPR033116">
    <property type="entry name" value="TRYPSIN_SER"/>
</dbReference>
<dbReference type="PANTHER" id="PTHR24271:SF62">
    <property type="entry name" value="KALLIKREIN-8"/>
    <property type="match status" value="1"/>
</dbReference>
<dbReference type="PANTHER" id="PTHR24271">
    <property type="entry name" value="KALLIKREIN-RELATED"/>
    <property type="match status" value="1"/>
</dbReference>
<dbReference type="Pfam" id="PF00089">
    <property type="entry name" value="Trypsin"/>
    <property type="match status" value="1"/>
</dbReference>
<dbReference type="PRINTS" id="PR00722">
    <property type="entry name" value="CHYMOTRYPSIN"/>
</dbReference>
<dbReference type="SMART" id="SM00020">
    <property type="entry name" value="Tryp_SPc"/>
    <property type="match status" value="1"/>
</dbReference>
<dbReference type="SUPFAM" id="SSF50494">
    <property type="entry name" value="Trypsin-like serine proteases"/>
    <property type="match status" value="1"/>
</dbReference>
<dbReference type="PROSITE" id="PS50240">
    <property type="entry name" value="TRYPSIN_DOM"/>
    <property type="match status" value="1"/>
</dbReference>
<dbReference type="PROSITE" id="PS00134">
    <property type="entry name" value="TRYPSIN_HIS"/>
    <property type="match status" value="1"/>
</dbReference>
<dbReference type="PROSITE" id="PS00135">
    <property type="entry name" value="TRYPSIN_SER"/>
    <property type="match status" value="1"/>
</dbReference>
<reference key="1">
    <citation type="journal article" date="1998" name="Gene">
        <title>Sequence analysis and expression of human neuropsin cDNA and gene.</title>
        <authorList>
            <person name="Yoshida S."/>
            <person name="Taniguchi M."/>
            <person name="Hirata A."/>
            <person name="Shiosaka S."/>
        </authorList>
    </citation>
    <scope>NUCLEOTIDE SEQUENCE [GENOMIC DNA / MRNA] (ISOFORM 1)</scope>
    <source>
        <tissue>Hippocampus</tissue>
    </source>
</reference>
<reference key="2">
    <citation type="journal article" date="1999" name="Cancer Res.">
        <title>Cloning of tumor-associated differentially expressed gene-14, a novel serine protease overexpressed by ovarian carcinoma.</title>
        <authorList>
            <person name="Underwood L.J."/>
            <person name="Tanimoto H."/>
            <person name="Wang Y."/>
            <person name="Shigemasa K."/>
            <person name="Parmley T.H."/>
            <person name="O'Brien T.J."/>
        </authorList>
    </citation>
    <scope>NUCLEOTIDE SEQUENCE [MRNA] (ISOFORM 1)</scope>
    <source>
        <tissue>Ovary</tissue>
    </source>
</reference>
<reference key="3">
    <citation type="journal article" date="1999" name="Eur. J. Biochem.">
        <title>A novel form of human neuropsin, a brain-related serine protease, is generated by alternative splicing and is expressed preferentially in human adult brain.</title>
        <authorList>
            <person name="Mitsui S."/>
            <person name="Tsuruoka N."/>
            <person name="Yamashiro K."/>
            <person name="Nakazato H."/>
            <person name="Yamaguchi N."/>
        </authorList>
    </citation>
    <scope>NUCLEOTIDE SEQUENCE [GENOMIC DNA / MRNA] (ISOFORMS 1 AND 2)</scope>
    <source>
        <tissue>Brain</tissue>
    </source>
</reference>
<reference key="4">
    <citation type="journal article" date="2000" name="Gene">
        <title>Sequencing and expression analysis of the serine protease gene cluster located in chromosome 19q13 region.</title>
        <authorList>
            <person name="Gan L."/>
            <person name="Lee I."/>
            <person name="Smith R."/>
            <person name="Argonza-Barrett R."/>
            <person name="Lei H."/>
            <person name="McCuaig J."/>
            <person name="Moss P."/>
            <person name="Paeper B."/>
            <person name="Wang K."/>
        </authorList>
    </citation>
    <scope>NUCLEOTIDE SEQUENCE [GENOMIC DNA]</scope>
</reference>
<reference key="5">
    <citation type="journal article" date="2001" name="Clin. Cancer Res.">
        <title>The human KLK8 (neuropsin/ovasin) gene: identification of two novel splice variants and its prognostic value in ovarian cancer.</title>
        <authorList>
            <person name="Magklara A."/>
            <person name="Scorilas A."/>
            <person name="Katsaros D."/>
            <person name="Massobrio M."/>
            <person name="Yousef G.M."/>
            <person name="Fracchioli S."/>
            <person name="Danese S."/>
            <person name="Diamandis E.P."/>
        </authorList>
    </citation>
    <scope>NUCLEOTIDE SEQUENCE [GENOMIC DNA] (ISOFORMS 3 AND 4)</scope>
    <scope>TISSUE SPECIFICITY</scope>
</reference>
<reference key="6">
    <citation type="submission" date="1998-09" db="EMBL/GenBank/DDBJ databases">
        <title>Molecular cloning and characterization of a novel serine protease, ovasin, a potential molecular marker for ovarian carcinomas.</title>
        <authorList>
            <person name="Gan L."/>
            <person name="Gelinas R."/>
            <person name="Gown A.M."/>
            <person name="Moss P."/>
            <person name="Smith R."/>
            <person name="Wang K."/>
        </authorList>
    </citation>
    <scope>NUCLEOTIDE SEQUENCE [GENOMIC DNA / MRNA] (ISOFORM 1)</scope>
</reference>
<reference key="7">
    <citation type="submission" date="2005-10" db="EMBL/GenBank/DDBJ databases">
        <title>Human kallikrein 8 and human kallikrein 9 are organized as a bicistronic operon.</title>
        <authorList>
            <person name="Michael I.P."/>
            <person name="Diamandis E.P."/>
        </authorList>
    </citation>
    <scope>NUCLEOTIDE SEQUENCE [MRNA] (ISOFORM 3)</scope>
</reference>
<reference key="8">
    <citation type="journal article" date="2003" name="Genome Res.">
        <title>The secreted protein discovery initiative (SPDI), a large-scale effort to identify novel human secreted and transmembrane proteins: a bioinformatics assessment.</title>
        <authorList>
            <person name="Clark H.F."/>
            <person name="Gurney A.L."/>
            <person name="Abaya E."/>
            <person name="Baker K."/>
            <person name="Baldwin D.T."/>
            <person name="Brush J."/>
            <person name="Chen J."/>
            <person name="Chow B."/>
            <person name="Chui C."/>
            <person name="Crowley C."/>
            <person name="Currell B."/>
            <person name="Deuel B."/>
            <person name="Dowd P."/>
            <person name="Eaton D."/>
            <person name="Foster J.S."/>
            <person name="Grimaldi C."/>
            <person name="Gu Q."/>
            <person name="Hass P.E."/>
            <person name="Heldens S."/>
            <person name="Huang A."/>
            <person name="Kim H.S."/>
            <person name="Klimowski L."/>
            <person name="Jin Y."/>
            <person name="Johnson S."/>
            <person name="Lee J."/>
            <person name="Lewis L."/>
            <person name="Liao D."/>
            <person name="Mark M.R."/>
            <person name="Robbie E."/>
            <person name="Sanchez C."/>
            <person name="Schoenfeld J."/>
            <person name="Seshagiri S."/>
            <person name="Simmons L."/>
            <person name="Singh J."/>
            <person name="Smith V."/>
            <person name="Stinson J."/>
            <person name="Vagts A."/>
            <person name="Vandlen R.L."/>
            <person name="Watanabe C."/>
            <person name="Wieand D."/>
            <person name="Woods K."/>
            <person name="Xie M.-H."/>
            <person name="Yansura D.G."/>
            <person name="Yi S."/>
            <person name="Yu G."/>
            <person name="Yuan J."/>
            <person name="Zhang M."/>
            <person name="Zhang Z."/>
            <person name="Goddard A.D."/>
            <person name="Wood W.I."/>
            <person name="Godowski P.J."/>
            <person name="Gray A.M."/>
        </authorList>
    </citation>
    <scope>NUCLEOTIDE SEQUENCE [LARGE SCALE MRNA] (ISOFORM 1)</scope>
</reference>
<reference key="9">
    <citation type="journal article" date="2004" name="Nature">
        <title>The DNA sequence and biology of human chromosome 19.</title>
        <authorList>
            <person name="Grimwood J."/>
            <person name="Gordon L.A."/>
            <person name="Olsen A.S."/>
            <person name="Terry A."/>
            <person name="Schmutz J."/>
            <person name="Lamerdin J.E."/>
            <person name="Hellsten U."/>
            <person name="Goodstein D."/>
            <person name="Couronne O."/>
            <person name="Tran-Gyamfi M."/>
            <person name="Aerts A."/>
            <person name="Altherr M."/>
            <person name="Ashworth L."/>
            <person name="Bajorek E."/>
            <person name="Black S."/>
            <person name="Branscomb E."/>
            <person name="Caenepeel S."/>
            <person name="Carrano A.V."/>
            <person name="Caoile C."/>
            <person name="Chan Y.M."/>
            <person name="Christensen M."/>
            <person name="Cleland C.A."/>
            <person name="Copeland A."/>
            <person name="Dalin E."/>
            <person name="Dehal P."/>
            <person name="Denys M."/>
            <person name="Detter J.C."/>
            <person name="Escobar J."/>
            <person name="Flowers D."/>
            <person name="Fotopulos D."/>
            <person name="Garcia C."/>
            <person name="Georgescu A.M."/>
            <person name="Glavina T."/>
            <person name="Gomez M."/>
            <person name="Gonzales E."/>
            <person name="Groza M."/>
            <person name="Hammon N."/>
            <person name="Hawkins T."/>
            <person name="Haydu L."/>
            <person name="Ho I."/>
            <person name="Huang W."/>
            <person name="Israni S."/>
            <person name="Jett J."/>
            <person name="Kadner K."/>
            <person name="Kimball H."/>
            <person name="Kobayashi A."/>
            <person name="Larionov V."/>
            <person name="Leem S.-H."/>
            <person name="Lopez F."/>
            <person name="Lou Y."/>
            <person name="Lowry S."/>
            <person name="Malfatti S."/>
            <person name="Martinez D."/>
            <person name="McCready P.M."/>
            <person name="Medina C."/>
            <person name="Morgan J."/>
            <person name="Nelson K."/>
            <person name="Nolan M."/>
            <person name="Ovcharenko I."/>
            <person name="Pitluck S."/>
            <person name="Pollard M."/>
            <person name="Popkie A.P."/>
            <person name="Predki P."/>
            <person name="Quan G."/>
            <person name="Ramirez L."/>
            <person name="Rash S."/>
            <person name="Retterer J."/>
            <person name="Rodriguez A."/>
            <person name="Rogers S."/>
            <person name="Salamov A."/>
            <person name="Salazar A."/>
            <person name="She X."/>
            <person name="Smith D."/>
            <person name="Slezak T."/>
            <person name="Solovyev V."/>
            <person name="Thayer N."/>
            <person name="Tice H."/>
            <person name="Tsai M."/>
            <person name="Ustaszewska A."/>
            <person name="Vo N."/>
            <person name="Wagner M."/>
            <person name="Wheeler J."/>
            <person name="Wu K."/>
            <person name="Xie G."/>
            <person name="Yang J."/>
            <person name="Dubchak I."/>
            <person name="Furey T.S."/>
            <person name="DeJong P."/>
            <person name="Dickson M."/>
            <person name="Gordon D."/>
            <person name="Eichler E.E."/>
            <person name="Pennacchio L.A."/>
            <person name="Richardson P."/>
            <person name="Stubbs L."/>
            <person name="Rokhsar D.S."/>
            <person name="Myers R.M."/>
            <person name="Rubin E.M."/>
            <person name="Lucas S.M."/>
        </authorList>
    </citation>
    <scope>NUCLEOTIDE SEQUENCE [LARGE SCALE GENOMIC DNA]</scope>
</reference>
<reference key="10">
    <citation type="submission" date="2005-07" db="EMBL/GenBank/DDBJ databases">
        <authorList>
            <person name="Mural R.J."/>
            <person name="Istrail S."/>
            <person name="Sutton G.G."/>
            <person name="Florea L."/>
            <person name="Halpern A.L."/>
            <person name="Mobarry C.M."/>
            <person name="Lippert R."/>
            <person name="Walenz B."/>
            <person name="Shatkay H."/>
            <person name="Dew I."/>
            <person name="Miller J.R."/>
            <person name="Flanigan M.J."/>
            <person name="Edwards N.J."/>
            <person name="Bolanos R."/>
            <person name="Fasulo D."/>
            <person name="Halldorsson B.V."/>
            <person name="Hannenhalli S."/>
            <person name="Turner R."/>
            <person name="Yooseph S."/>
            <person name="Lu F."/>
            <person name="Nusskern D.R."/>
            <person name="Shue B.C."/>
            <person name="Zheng X.H."/>
            <person name="Zhong F."/>
            <person name="Delcher A.L."/>
            <person name="Huson D.H."/>
            <person name="Kravitz S.A."/>
            <person name="Mouchard L."/>
            <person name="Reinert K."/>
            <person name="Remington K.A."/>
            <person name="Clark A.G."/>
            <person name="Waterman M.S."/>
            <person name="Eichler E.E."/>
            <person name="Adams M.D."/>
            <person name="Hunkapiller M.W."/>
            <person name="Myers E.W."/>
            <person name="Venter J.C."/>
        </authorList>
    </citation>
    <scope>NUCLEOTIDE SEQUENCE [LARGE SCALE GENOMIC DNA]</scope>
</reference>
<reference key="11">
    <citation type="journal article" date="2004" name="Genome Res.">
        <title>The status, quality, and expansion of the NIH full-length cDNA project: the Mammalian Gene Collection (MGC).</title>
        <authorList>
            <consortium name="The MGC Project Team"/>
        </authorList>
    </citation>
    <scope>NUCLEOTIDE SEQUENCE [LARGE SCALE MRNA] (ISOFORM 1)</scope>
    <source>
        <tissue>Brain</tissue>
    </source>
</reference>
<reference key="12">
    <citation type="journal article" date="2004" name="Mol. Biol. Evol.">
        <title>Recent origin of a hominoid-specific splice form of neuropsin, a gene involved in learning and memory.</title>
        <authorList>
            <person name="Li Y."/>
            <person name="Qian Y.-P."/>
            <person name="Yu X.-J."/>
            <person name="Wang Y.-Q."/>
            <person name="Dong D.-G."/>
            <person name="Sun W."/>
            <person name="Ma R.-M."/>
            <person name="Su B."/>
        </authorList>
    </citation>
    <scope>PARTIAL NUCLEOTIDE SEQUENCE [GENOMIC DNA] (ISOFORMS 1 AND 2)</scope>
</reference>
<reference key="13">
    <citation type="journal article" date="2001" name="NeuroReport">
        <title>Expression of the kallikrein gene family in normal and Alzheimer's disease brain.</title>
        <authorList>
            <person name="Shimizu-Okabe C."/>
            <person name="Yousef G.M."/>
            <person name="Diamandis E.P."/>
            <person name="Yoshida S."/>
            <person name="Shiosaka S."/>
            <person name="Fahnestock M."/>
        </authorList>
    </citation>
    <scope>TISSUE SPECIFICITY</scope>
</reference>
<reference key="14">
    <citation type="journal article" date="2002" name="Mol. Pathol.">
        <title>Epidermal expression of serine protease, neuropsin (KLK8) in normal and pathological skin samples.</title>
        <authorList>
            <person name="Kuwae K."/>
            <person name="Matsumoto-Miyai K."/>
            <person name="Yoshida S."/>
            <person name="Sadayama T."/>
            <person name="Yoshikawa K."/>
            <person name="Hosokawa K."/>
            <person name="Shiosaka S."/>
        </authorList>
    </citation>
    <scope>TISSUE SPECIFICITY</scope>
</reference>
<reference key="15">
    <citation type="journal article" date="2003" name="Cancer Res.">
        <title>Human kallikrein 8, a novel biomarker for ovarian carcinoma.</title>
        <authorList>
            <person name="Kishi T."/>
            <person name="Grass L."/>
            <person name="Soosaipillai A."/>
            <person name="Scorilas A."/>
            <person name="Harbeck N."/>
            <person name="Schmalfeldt B."/>
            <person name="Dorn J."/>
            <person name="Mysliwiec M."/>
            <person name="Schmitt M."/>
            <person name="Diamandis E.P."/>
        </authorList>
    </citation>
    <scope>USE AS A MARKER FOR OVARIAN CANCER</scope>
</reference>
<reference key="16">
    <citation type="journal article" date="2005" name="FEBS Lett.">
        <title>Biochemical characterization of human kallikrein 8 and its possible involvement in the degradation of extracellular matrix proteins.</title>
        <authorList>
            <person name="Rajapakse S."/>
            <person name="Ogiwara K."/>
            <person name="Takano N."/>
            <person name="Moriyama A."/>
            <person name="Takahashi T."/>
        </authorList>
    </citation>
    <scope>FUNCTION</scope>
    <scope>CATALYTIC ACTIVITY</scope>
    <scope>ACTIVITY REGULATION</scope>
    <scope>BIOPHYSICOCHEMICAL PROPERTIES</scope>
</reference>
<reference key="17">
    <citation type="journal article" date="2007" name="Hum. Mutat.">
        <title>A human-specific mutation leads to the origin of a novel splice form of neuropsin (KLK8), a gene involved in learning and memory.</title>
        <authorList>
            <person name="Lu Z.-X."/>
            <person name="Peng J."/>
            <person name="Su B."/>
        </authorList>
    </citation>
    <scope>ALTERNATIVE SPLICING (ISOFORM 2)</scope>
</reference>
<reference key="18">
    <citation type="journal article" date="2007" name="J. Biochem.">
        <title>SerpinB6 is an inhibitor of kallikrein-8 in keratinocytes.</title>
        <authorList>
            <person name="Scott F.L."/>
            <person name="Sun J."/>
            <person name="Whisstock J.C."/>
            <person name="Kato K."/>
            <person name="Bird P.I."/>
        </authorList>
    </citation>
    <scope>SUBCELLULAR LOCATION</scope>
    <scope>TISSUE SPECIFICITY</scope>
</reference>
<reference key="19">
    <citation type="journal article" date="2009" name="J. Invest. Dermatol.">
        <title>SPINK9: a selective, skin-specific Kazal-type serine protease inhibitor.</title>
        <authorList>
            <person name="Brattsand M."/>
            <person name="Stefansson K."/>
            <person name="Hubiche T."/>
            <person name="Nilsson S.K."/>
            <person name="Egelrud T."/>
        </authorList>
    </citation>
    <scope>INTERACTION WITH SPINK9</scope>
</reference>
<keyword id="KW-0002">3D-structure</keyword>
<keyword id="KW-0025">Alternative splicing</keyword>
<keyword id="KW-0963">Cytoplasm</keyword>
<keyword id="KW-1015">Disulfide bond</keyword>
<keyword id="KW-0325">Glycoprotein</keyword>
<keyword id="KW-0378">Hydrolase</keyword>
<keyword id="KW-0645">Protease</keyword>
<keyword id="KW-1267">Proteomics identification</keyword>
<keyword id="KW-1185">Reference proteome</keyword>
<keyword id="KW-0964">Secreted</keyword>
<keyword id="KW-0720">Serine protease</keyword>
<keyword id="KW-0732">Signal</keyword>
<keyword id="KW-0865">Zymogen</keyword>
<feature type="signal peptide" evidence="2">
    <location>
        <begin position="1"/>
        <end position="28"/>
    </location>
</feature>
<feature type="propeptide" id="PRO_0000027946" evidence="1">
    <location>
        <begin position="29"/>
        <end position="32"/>
    </location>
</feature>
<feature type="chain" id="PRO_0000027947" description="Kallikrein-8">
    <location>
        <begin position="33"/>
        <end position="260"/>
    </location>
</feature>
<feature type="domain" description="Peptidase S1" evidence="3">
    <location>
        <begin position="33"/>
        <end position="257"/>
    </location>
</feature>
<feature type="active site" description="Charge relay system" evidence="1">
    <location>
        <position position="73"/>
    </location>
</feature>
<feature type="active site" description="Charge relay system" evidence="1">
    <location>
        <position position="120"/>
    </location>
</feature>
<feature type="active site" description="Charge relay system" evidence="1">
    <location>
        <position position="212"/>
    </location>
</feature>
<feature type="glycosylation site" description="N-linked (GlcNAc...) asparagine" evidence="2">
    <location>
        <position position="110"/>
    </location>
</feature>
<feature type="disulfide bond" evidence="3">
    <location>
        <begin position="39"/>
        <end position="173"/>
    </location>
</feature>
<feature type="disulfide bond" evidence="3">
    <location>
        <begin position="58"/>
        <end position="74"/>
    </location>
</feature>
<feature type="disulfide bond" evidence="3">
    <location>
        <begin position="145"/>
        <end position="246"/>
    </location>
</feature>
<feature type="disulfide bond" evidence="3">
    <location>
        <begin position="152"/>
        <end position="218"/>
    </location>
</feature>
<feature type="disulfide bond" evidence="3">
    <location>
        <begin position="184"/>
        <end position="198"/>
    </location>
</feature>
<feature type="disulfide bond" evidence="3">
    <location>
        <begin position="208"/>
        <end position="233"/>
    </location>
</feature>
<feature type="splice variant" id="VSP_005401" description="In isoform 2." evidence="10">
    <original>A</original>
    <variation>AACGSLDLLTKLYAENLPCVHLNPQWPSQPSHCPRGWRSNPLPPAA</variation>
    <location>
        <position position="23"/>
    </location>
</feature>
<feature type="splice variant" id="VSP_030350" description="In isoform 3." evidence="11">
    <location>
        <begin position="24"/>
        <end position="164"/>
    </location>
</feature>
<feature type="splice variant" id="VSP_030351" description="In isoform 4." evidence="12">
    <original>HSRAQEDK</original>
    <variation>RFWRPPGV</variation>
    <location>
        <begin position="25"/>
        <end position="32"/>
    </location>
</feature>
<feature type="splice variant" id="VSP_030352" description="In isoform 4." evidence="12">
    <location>
        <begin position="33"/>
        <end position="260"/>
    </location>
</feature>
<feature type="sequence variant" id="VAR_051855" description="In dbSNP:rs16988799.">
    <original>V</original>
    <variation>I</variation>
    <location>
        <position position="154"/>
    </location>
</feature>
<feature type="sequence conflict" description="In Ref. 11; AAH40887." evidence="12" ref="11">
    <original>G</original>
    <variation>V</variation>
    <location>
        <position position="195"/>
    </location>
</feature>
<feature type="strand" evidence="14">
    <location>
        <begin position="47"/>
        <end position="54"/>
    </location>
</feature>
<feature type="strand" evidence="14">
    <location>
        <begin position="56"/>
        <end position="64"/>
    </location>
</feature>
<feature type="strand" evidence="14">
    <location>
        <begin position="67"/>
        <end position="70"/>
    </location>
</feature>
<feature type="helix" evidence="14">
    <location>
        <begin position="72"/>
        <end position="74"/>
    </location>
</feature>
<feature type="strand" evidence="14">
    <location>
        <begin position="80"/>
        <end position="84"/>
    </location>
</feature>
<feature type="strand" evidence="14">
    <location>
        <begin position="86"/>
        <end position="90"/>
    </location>
</feature>
<feature type="strand" evidence="14">
    <location>
        <begin position="96"/>
        <end position="105"/>
    </location>
</feature>
<feature type="strand" evidence="13">
    <location>
        <begin position="111"/>
        <end position="113"/>
    </location>
</feature>
<feature type="strand" evidence="14">
    <location>
        <begin position="122"/>
        <end position="128"/>
    </location>
</feature>
<feature type="strand" evidence="14">
    <location>
        <begin position="133"/>
        <end position="136"/>
    </location>
</feature>
<feature type="strand" evidence="14">
    <location>
        <begin position="151"/>
        <end position="158"/>
    </location>
</feature>
<feature type="strand" evidence="14">
    <location>
        <begin position="160"/>
        <end position="164"/>
    </location>
</feature>
<feature type="strand" evidence="14">
    <location>
        <begin position="172"/>
        <end position="178"/>
    </location>
</feature>
<feature type="helix" evidence="14">
    <location>
        <begin position="181"/>
        <end position="187"/>
    </location>
</feature>
<feature type="turn" evidence="14">
    <location>
        <begin position="189"/>
        <end position="191"/>
    </location>
</feature>
<feature type="strand" evidence="14">
    <location>
        <begin position="196"/>
        <end position="200"/>
    </location>
</feature>
<feature type="strand" evidence="14">
    <location>
        <begin position="215"/>
        <end position="228"/>
    </location>
</feature>
<feature type="strand" evidence="13">
    <location>
        <begin position="231"/>
        <end position="234"/>
    </location>
</feature>
<feature type="strand" evidence="14">
    <location>
        <begin position="236"/>
        <end position="238"/>
    </location>
</feature>
<feature type="strand" evidence="14">
    <location>
        <begin position="240"/>
        <end position="244"/>
    </location>
</feature>
<feature type="helix" evidence="14">
    <location>
        <begin position="245"/>
        <end position="247"/>
    </location>
</feature>
<feature type="helix" evidence="14">
    <location>
        <begin position="249"/>
        <end position="257"/>
    </location>
</feature>
<evidence type="ECO:0000250" key="1"/>
<evidence type="ECO:0000255" key="2"/>
<evidence type="ECO:0000255" key="3">
    <source>
        <dbReference type="PROSITE-ProRule" id="PRU00274"/>
    </source>
</evidence>
<evidence type="ECO:0000269" key="4">
    <source>
    </source>
</evidence>
<evidence type="ECO:0000269" key="5">
    <source>
    </source>
</evidence>
<evidence type="ECO:0000269" key="6">
    <source>
    </source>
</evidence>
<evidence type="ECO:0000269" key="7">
    <source>
    </source>
</evidence>
<evidence type="ECO:0000269" key="8">
    <source>
    </source>
</evidence>
<evidence type="ECO:0000269" key="9">
    <source>
    </source>
</evidence>
<evidence type="ECO:0000303" key="10">
    <source>
    </source>
</evidence>
<evidence type="ECO:0000303" key="11">
    <source ref="7"/>
</evidence>
<evidence type="ECO:0000305" key="12"/>
<evidence type="ECO:0007829" key="13">
    <source>
        <dbReference type="PDB" id="5MS3"/>
    </source>
</evidence>
<evidence type="ECO:0007829" key="14">
    <source>
        <dbReference type="PDB" id="5MS4"/>
    </source>
</evidence>
<protein>
    <recommendedName>
        <fullName>Kallikrein-8</fullName>
        <shortName>hK8</shortName>
        <ecNumber>3.4.21.118</ecNumber>
    </recommendedName>
    <alternativeName>
        <fullName>Neuropsin</fullName>
        <shortName>NP</shortName>
    </alternativeName>
    <alternativeName>
        <fullName>Ovasin</fullName>
    </alternativeName>
    <alternativeName>
        <fullName>Serine protease 19</fullName>
    </alternativeName>
    <alternativeName>
        <fullName>Serine protease TADG-14</fullName>
    </alternativeName>
    <alternativeName>
        <fullName>Tumor-associated differentially expressed gene 14 protein</fullName>
    </alternativeName>
</protein>
<accession>O60259</accession>
<accession>Q5V9X1</accession>
<accession>Q5V9X2</accession>
<accession>Q8IW69</accession>
<accession>Q9HCB3</accession>
<accession>Q9NR68</accession>
<accession>Q9NR69</accession>
<accession>Q9UIL9</accession>
<accession>Q9UQ47</accession>
<proteinExistence type="evidence at protein level"/>
<name>KLK8_HUMAN</name>
<sequence>MGRPRPRAAKTWMFLLLLGGAWAGHSRAQEDKVLGGHECQPHSQPWQAALFQGQQLLCGGVLVGGNWVLTAAHCKKPKYTVRLGDHSLQNKDGPEQEIPVVQSIPHPCYNSSDVEDHNHDLMLLQLRDQASLGSKVKPISLADHCTQPGQKCTVSGWGTVTSPRENFPDTLNCAEVKIFPQKKCEDAYPGQITDGMVCAGSSKGADTCQGDSGGPLVCDGALQGITSWGSDPCGRSDKPGVYTNICRYLDWIKKIIGSKG</sequence>
<comment type="function">
    <text evidence="7">Serine protease which is capable of degrading a number of proteins such as casein, fibrinogen, kininogen, fibronectin and collagen type IV. Also cleaves L1CAM in response to increased neural activity. Induces neurite outgrowth and fasciculation of cultured hippocampal neurons. Plays a role in the formation and maturation of orphan and small synaptic boutons in the Schaffer-collateral pathway, regulates Schaffer-collateral long-term potentiation in the hippocampus and is required for memory acquisition and synaptic plasticity. Involved in skin desquamation and keratinocyte proliferation. Plays a role in the secondary phase of pathogenesis following spinal cord injury.</text>
</comment>
<comment type="catalytic activity">
    <reaction evidence="7">
        <text>Cleavage of amide substrates following the basic amino acids Arg or Lys at the P1 position, with a preference for Arg over Lys.</text>
        <dbReference type="EC" id="3.4.21.118"/>
    </reaction>
</comment>
<comment type="activity regulation">
    <text evidence="7">Inhibited by a range of serine protease inhibitors including antipain, aprotinin, leupeptin, benzamidine and soybean trypsin inhibitor.</text>
</comment>
<comment type="biophysicochemical properties">
    <kinetics>
        <KM evidence="7">0.07 mM for Pro-Phe-Arg-MCA</KM>
        <KM evidence="7">0.07 mM for Z-Val-Val-Arg-MCA</KM>
        <KM evidence="7">0.07 mM for Boc-Val-Pro-Arg-MCA</KM>
        <KM evidence="7">0.1 mM for Boc-Leu-Lys-Arg-MCA</KM>
        <KM evidence="7">0.1 mM for Boc-Val-Leu-Lys-MCA</KM>
        <KM evidence="7">0.07 mM for Boc-Phe-Ser-Arg-MCA</KM>
        <Vmax evidence="7">7.1 umol/min/mg enzyme toward Pro-Phe-Arg-MCA</Vmax>
        <Vmax evidence="7">5.4 umol/min/mg enzyme toward Z-Val-Val-Arg-MCA</Vmax>
        <Vmax evidence="7">3.9 umol/min/mg enzyme toward Boc-Val-Pro-Arg-MCA</Vmax>
        <Vmax evidence="7">2.6 umol/min/mg enzyme toward Boc-Leu-Lys-Arg-MCA</Vmax>
        <Vmax evidence="7">1.9 umol/min/mg enzyme toward Boc-Val-Leu-Lys-MCA</Vmax>
        <Vmax evidence="7">1.6 umol/min/mg enzyme toward Boc-Phe-Ser-Arg-MCA</Vmax>
    </kinetics>
    <phDependence>
        <text evidence="7">Optimum pH is 8.5. Active from pH 7-10.</text>
    </phDependence>
</comment>
<comment type="subunit">
    <text evidence="9">Interacts with SPINK9.</text>
</comment>
<comment type="interaction">
    <interactant intactId="EBI-3915857">
        <id>O60259</id>
    </interactant>
    <interactant intactId="EBI-3867333">
        <id>A8MQ03</id>
        <label>CYSRT1</label>
    </interactant>
    <organismsDiffer>false</organismsDiffer>
    <experiments>3</experiments>
</comment>
<comment type="interaction">
    <interactant intactId="EBI-3915857">
        <id>O60259</id>
    </interactant>
    <interactant intactId="EBI-466029">
        <id>P42858</id>
        <label>HTT</label>
    </interactant>
    <organismsDiffer>false</organismsDiffer>
    <experiments>3</experiments>
</comment>
<comment type="interaction">
    <interactant intactId="EBI-3915857">
        <id>O60259</id>
    </interactant>
    <interactant intactId="EBI-2432309">
        <id>Q92876</id>
        <label>KLK6</label>
    </interactant>
    <organismsDiffer>false</organismsDiffer>
    <experiments>3</experiments>
</comment>
<comment type="interaction">
    <interactant intactId="EBI-3915857">
        <id>O60259</id>
    </interactant>
    <interactant intactId="EBI-948001">
        <id>Q15323</id>
        <label>KRT31</label>
    </interactant>
    <organismsDiffer>false</organismsDiffer>
    <experiments>3</experiments>
</comment>
<comment type="interaction">
    <interactant intactId="EBI-3915857">
        <id>O60259</id>
    </interactant>
    <interactant intactId="EBI-1047093">
        <id>O76011</id>
        <label>KRT34</label>
    </interactant>
    <organismsDiffer>false</organismsDiffer>
    <experiments>3</experiments>
</comment>
<comment type="interaction">
    <interactant intactId="EBI-3915857">
        <id>O60259</id>
    </interactant>
    <interactant intactId="EBI-11959885">
        <id>Q07627</id>
        <label>KRTAP1-1</label>
    </interactant>
    <organismsDiffer>false</organismsDiffer>
    <experiments>3</experiments>
</comment>
<comment type="interaction">
    <interactant intactId="EBI-3915857">
        <id>O60259</id>
    </interactant>
    <interactant intactId="EBI-10171774">
        <id>P60410</id>
        <label>KRTAP10-8</label>
    </interactant>
    <organismsDiffer>false</organismsDiffer>
    <experiments>3</experiments>
</comment>
<comment type="interaction">
    <interactant intactId="EBI-3915857">
        <id>O60259</id>
    </interactant>
    <interactant intactId="EBI-3958099">
        <id>P26371</id>
        <label>KRTAP5-9</label>
    </interactant>
    <organismsDiffer>false</organismsDiffer>
    <experiments>3</experiments>
</comment>
<comment type="interaction">
    <interactant intactId="EBI-3915857">
        <id>O60259</id>
    </interactant>
    <interactant intactId="EBI-945833">
        <id>Q7Z3S9</id>
        <label>NOTCH2NLA</label>
    </interactant>
    <organismsDiffer>false</organismsDiffer>
    <experiments>3</experiments>
</comment>
<comment type="interaction">
    <interactant intactId="EBI-3915857">
        <id>O60259</id>
    </interactant>
    <interactant intactId="EBI-22310682">
        <id>P0DPK4</id>
        <label>NOTCH2NLC</label>
    </interactant>
    <organismsDiffer>false</organismsDiffer>
    <experiments>3</experiments>
</comment>
<comment type="interaction">
    <interactant intactId="EBI-3915857">
        <id>O60259</id>
    </interactant>
    <interactant intactId="EBI-350723">
        <id>P50454</id>
        <label>SERPINH1</label>
    </interactant>
    <organismsDiffer>false</organismsDiffer>
    <experiments>3</experiments>
</comment>
<comment type="interaction">
    <interactant intactId="EBI-3915857">
        <id>O60259</id>
    </interactant>
    <interactant intactId="EBI-296151">
        <id>P37173</id>
        <label>TGFBR2</label>
    </interactant>
    <organismsDiffer>false</organismsDiffer>
    <experiments>3</experiments>
</comment>
<comment type="interaction">
    <interactant intactId="EBI-3915857">
        <id>O60259</id>
    </interactant>
    <interactant intactId="EBI-524753">
        <id>Q8IUH5</id>
        <label>ZDHHC17</label>
    </interactant>
    <organismsDiffer>false</organismsDiffer>
    <experiments>3</experiments>
</comment>
<comment type="subcellular location">
    <subcellularLocation>
        <location evidence="8">Secreted</location>
    </subcellularLocation>
    <subcellularLocation>
        <location evidence="8">Cytoplasm</location>
    </subcellularLocation>
    <text>Shows a cytoplasmic distribution in the keratinocytes.</text>
</comment>
<comment type="alternative products">
    <event type="alternative splicing"/>
    <isoform>
        <id>O60259-1</id>
        <name>1</name>
        <sequence type="displayed"/>
    </isoform>
    <isoform>
        <id>O60259-2</id>
        <name>2</name>
        <sequence type="described" ref="VSP_005401"/>
    </isoform>
    <isoform>
        <id>O60259-3</id>
        <name>3</name>
        <sequence type="described" ref="VSP_030350"/>
    </isoform>
    <isoform>
        <id>O60259-4</id>
        <name>4</name>
        <sequence type="described" ref="VSP_030351 VSP_030352"/>
    </isoform>
</comment>
<comment type="tissue specificity">
    <text evidence="4 5 6 8">Isoform 1 is predominantly expressed in the pancreas. Isoform 2 is expressed in adult brain and hippocampus. Isoform 1 and isoform 2 are found in fetal brain and placenta. Detected in salivary gland, uterus, thymus, breast, testis and kidney but not in spleen, liver, lung or normal ovarian tissue. Displays an 11.5-fold increase in Alzheimer disease hippocampus compared to controls and is overexpressed in some ovarian carcinomas. Expressed at low levels in normal skin while high levels are found in psoriasis vulgaris, seborrheic keratosis, lichen planus and squamous cell carcinoma skin samples. Expressed in the keratinocytes.</text>
</comment>
<comment type="miscellaneous">
    <text>Expressed at high levels in serum, ascites fluid and tumor cytosol of advanced stage ovarian cancer patients and may serve as a marker of ovarian cancer.</text>
</comment>
<comment type="miscellaneous">
    <molecule>Isoform 2</molecule>
    <text evidence="12">Produced as a result of a human-specific mutation which is not found in other primates.</text>
</comment>
<comment type="similarity">
    <text evidence="3">Belongs to the peptidase S1 family. Kallikrein subfamily.</text>
</comment>
<comment type="online information" name="Atlas of Genetics and Cytogenetics in Oncology and Haematology">
    <link uri="https://atlasgeneticsoncology.org/gene/41088/KLK8"/>
</comment>